<dbReference type="EMBL" id="CR857796">
    <property type="protein sequence ID" value="CAH90058.1"/>
    <property type="molecule type" value="mRNA"/>
</dbReference>
<dbReference type="RefSeq" id="NP_001124985.1">
    <property type="nucleotide sequence ID" value="NM_001131513.1"/>
</dbReference>
<dbReference type="SMR" id="Q5RDU9"/>
<dbReference type="FunCoup" id="Q5RDU9">
    <property type="interactions" value="2392"/>
</dbReference>
<dbReference type="STRING" id="9601.ENSPPYP00000007534"/>
<dbReference type="GeneID" id="100171859"/>
<dbReference type="KEGG" id="pon:100171859"/>
<dbReference type="CTD" id="80153"/>
<dbReference type="eggNOG" id="KOG2585">
    <property type="taxonomic scope" value="Eukaryota"/>
</dbReference>
<dbReference type="InParanoid" id="Q5RDU9"/>
<dbReference type="OrthoDB" id="10030313at2759"/>
<dbReference type="Proteomes" id="UP000001595">
    <property type="component" value="Unplaced"/>
</dbReference>
<dbReference type="GO" id="GO:0000932">
    <property type="term" value="C:P-body"/>
    <property type="evidence" value="ECO:0007669"/>
    <property type="project" value="UniProtKB-SubCell"/>
</dbReference>
<dbReference type="GO" id="GO:0003729">
    <property type="term" value="F:mRNA binding"/>
    <property type="evidence" value="ECO:0007669"/>
    <property type="project" value="InterPro"/>
</dbReference>
<dbReference type="GO" id="GO:0031087">
    <property type="term" value="P:deadenylation-independent decapping of nuclear-transcribed mRNA"/>
    <property type="evidence" value="ECO:0007669"/>
    <property type="project" value="InterPro"/>
</dbReference>
<dbReference type="GO" id="GO:0033962">
    <property type="term" value="P:P-body assembly"/>
    <property type="evidence" value="ECO:0007669"/>
    <property type="project" value="TreeGrafter"/>
</dbReference>
<dbReference type="CDD" id="cd01737">
    <property type="entry name" value="LSm16_N"/>
    <property type="match status" value="1"/>
</dbReference>
<dbReference type="FunFam" id="2.30.30.100:FF:000026">
    <property type="entry name" value="Enhancer of mRNA-decapping protein 3"/>
    <property type="match status" value="1"/>
</dbReference>
<dbReference type="FunFam" id="3.40.50.10260:FF:000001">
    <property type="entry name" value="Enhancer of mRNA-decapping protein 3"/>
    <property type="match status" value="1"/>
</dbReference>
<dbReference type="Gene3D" id="2.30.30.100">
    <property type="match status" value="1"/>
</dbReference>
<dbReference type="Gene3D" id="3.40.50.10260">
    <property type="entry name" value="YjeF N-terminal domain"/>
    <property type="match status" value="1"/>
</dbReference>
<dbReference type="InterPro" id="IPR025762">
    <property type="entry name" value="DFDF"/>
</dbReference>
<dbReference type="InterPro" id="IPR019050">
    <property type="entry name" value="FDF_dom"/>
</dbReference>
<dbReference type="InterPro" id="IPR025609">
    <property type="entry name" value="Lsm14-like_N"/>
</dbReference>
<dbReference type="InterPro" id="IPR034107">
    <property type="entry name" value="Lsm16_N"/>
</dbReference>
<dbReference type="InterPro" id="IPR047575">
    <property type="entry name" value="Sm"/>
</dbReference>
<dbReference type="InterPro" id="IPR004443">
    <property type="entry name" value="YjeF_N_dom"/>
</dbReference>
<dbReference type="InterPro" id="IPR036652">
    <property type="entry name" value="YjeF_N_dom_sf"/>
</dbReference>
<dbReference type="PANTHER" id="PTHR13612">
    <property type="entry name" value="ENHANCER OF MRNA-DECAPPING PROTEIN 3"/>
    <property type="match status" value="1"/>
</dbReference>
<dbReference type="PANTHER" id="PTHR13612:SF0">
    <property type="entry name" value="ENHANCER OF MRNA-DECAPPING PROTEIN 3"/>
    <property type="match status" value="1"/>
</dbReference>
<dbReference type="Pfam" id="PF16598">
    <property type="entry name" value="Edc3_linker"/>
    <property type="match status" value="1"/>
</dbReference>
<dbReference type="Pfam" id="PF09532">
    <property type="entry name" value="FDF"/>
    <property type="match status" value="1"/>
</dbReference>
<dbReference type="Pfam" id="PF12701">
    <property type="entry name" value="LSM14"/>
    <property type="match status" value="1"/>
</dbReference>
<dbReference type="Pfam" id="PF03853">
    <property type="entry name" value="YjeF_N"/>
    <property type="match status" value="1"/>
</dbReference>
<dbReference type="SMART" id="SM01199">
    <property type="entry name" value="FDF"/>
    <property type="match status" value="1"/>
</dbReference>
<dbReference type="SMART" id="SM01271">
    <property type="entry name" value="LSM14"/>
    <property type="match status" value="1"/>
</dbReference>
<dbReference type="SUPFAM" id="SSF64153">
    <property type="entry name" value="YjeF N-terminal domain-like"/>
    <property type="match status" value="1"/>
</dbReference>
<dbReference type="PROSITE" id="PS51512">
    <property type="entry name" value="DFDF"/>
    <property type="match status" value="1"/>
</dbReference>
<dbReference type="PROSITE" id="PS52002">
    <property type="entry name" value="SM"/>
    <property type="match status" value="1"/>
</dbReference>
<dbReference type="PROSITE" id="PS51385">
    <property type="entry name" value="YJEF_N"/>
    <property type="match status" value="1"/>
</dbReference>
<organism>
    <name type="scientific">Pongo abelii</name>
    <name type="common">Sumatran orangutan</name>
    <name type="synonym">Pongo pygmaeus abelii</name>
    <dbReference type="NCBI Taxonomy" id="9601"/>
    <lineage>
        <taxon>Eukaryota</taxon>
        <taxon>Metazoa</taxon>
        <taxon>Chordata</taxon>
        <taxon>Craniata</taxon>
        <taxon>Vertebrata</taxon>
        <taxon>Euteleostomi</taxon>
        <taxon>Mammalia</taxon>
        <taxon>Eutheria</taxon>
        <taxon>Euarchontoglires</taxon>
        <taxon>Primates</taxon>
        <taxon>Haplorrhini</taxon>
        <taxon>Catarrhini</taxon>
        <taxon>Hominidae</taxon>
        <taxon>Pongo</taxon>
    </lineage>
</organism>
<gene>
    <name type="primary">EDC3</name>
    <name type="synonym">YJDC</name>
</gene>
<keyword id="KW-0963">Cytoplasm</keyword>
<keyword id="KW-0597">Phosphoprotein</keyword>
<keyword id="KW-1185">Reference proteome</keyword>
<keyword id="KW-0694">RNA-binding</keyword>
<comment type="function">
    <text evidence="2">Binds single-stranded RNA. Involved in the process of mRNA degradation and in the positive regulation of mRNA decapping (By similarity).</text>
</comment>
<comment type="subunit">
    <text evidence="2">Homodimer (via YjeF N-terminal domain). Forms a complex with DCP1A, DCP2, DDX6 and EDC4/HEDLS, within this complex directly interacts with DCP1A and DDX6. Interacts with ZFP36.</text>
</comment>
<comment type="subcellular location">
    <subcellularLocation>
        <location evidence="1">Cytoplasm</location>
        <location evidence="1">P-body</location>
    </subcellularLocation>
    <text evidence="1">Processing bodies (PB).</text>
</comment>
<comment type="domain">
    <text evidence="1">The DFDF domain is unstructured by itself. It assumes a helical fold upon interaction with DDX6 (By similarity).</text>
</comment>
<comment type="similarity">
    <text evidence="7">Belongs to the EDC3 family.</text>
</comment>
<accession>Q5RDU9</accession>
<reference key="1">
    <citation type="submission" date="2004-11" db="EMBL/GenBank/DDBJ databases">
        <authorList>
            <consortium name="The German cDNA consortium"/>
        </authorList>
    </citation>
    <scope>NUCLEOTIDE SEQUENCE [LARGE SCALE MRNA]</scope>
    <source>
        <tissue>Brain cortex</tissue>
    </source>
</reference>
<feature type="chain" id="PRO_0000119057" description="Enhancer of mRNA-decapping protein 3">
    <location>
        <begin position="1"/>
        <end position="508"/>
    </location>
</feature>
<feature type="domain" description="Sm" evidence="5">
    <location>
        <begin position="1"/>
        <end position="68"/>
    </location>
</feature>
<feature type="domain" description="DFDF" evidence="4">
    <location>
        <begin position="192"/>
        <end position="228"/>
    </location>
</feature>
<feature type="domain" description="YjeF N-terminal" evidence="3">
    <location>
        <begin position="283"/>
        <end position="487"/>
    </location>
</feature>
<feature type="region of interest" description="Required for P-body targeting and interaction with DCP1A" evidence="1">
    <location>
        <begin position="1"/>
        <end position="79"/>
    </location>
</feature>
<feature type="region of interest" description="Disordered" evidence="6">
    <location>
        <begin position="89"/>
        <end position="192"/>
    </location>
</feature>
<feature type="region of interest" description="Required for interaction with DDX6" evidence="1">
    <location>
        <begin position="191"/>
        <end position="296"/>
    </location>
</feature>
<feature type="modified residue" description="Phosphoserine" evidence="2">
    <location>
        <position position="131"/>
    </location>
</feature>
<feature type="modified residue" description="Phosphoserine" evidence="2">
    <location>
        <position position="138"/>
    </location>
</feature>
<feature type="modified residue" description="Phosphoserine" evidence="2">
    <location>
        <position position="140"/>
    </location>
</feature>
<feature type="modified residue" description="Phosphoserine" evidence="2">
    <location>
        <position position="161"/>
    </location>
</feature>
<evidence type="ECO:0000250" key="1"/>
<evidence type="ECO:0000250" key="2">
    <source>
        <dbReference type="UniProtKB" id="Q96F86"/>
    </source>
</evidence>
<evidence type="ECO:0000255" key="3">
    <source>
        <dbReference type="PROSITE-ProRule" id="PRU00719"/>
    </source>
</evidence>
<evidence type="ECO:0000255" key="4">
    <source>
        <dbReference type="PROSITE-ProRule" id="PRU00845"/>
    </source>
</evidence>
<evidence type="ECO:0000255" key="5">
    <source>
        <dbReference type="PROSITE-ProRule" id="PRU01346"/>
    </source>
</evidence>
<evidence type="ECO:0000256" key="6">
    <source>
        <dbReference type="SAM" id="MobiDB-lite"/>
    </source>
</evidence>
<evidence type="ECO:0000305" key="7"/>
<sequence>MATDWLGSIVSINCGDSLGVYQGRVSAVDQVSQTISLTRPFHNGVKCLVPEVTFRAGDITELKILEIPGPGDNQHFGDLHQTELGPSGAGCQVGINQNGTGKLVKKPASSSSAPQNIPKRTDVKSQDVAVSPQQQQCSKSYVDRHMESLSQSKSFRRRHNSWSSSSRHPNQATPKKSGLKNGQMKNKDDECFGDDIEEIPDTDFDFEGNLALFDKAAVFEEIDTYERRSGTRSRGIPNERPTRYRHDENILESEPIVYRRITVPHNVSKEFCTDSGLVVPSISYELHKKLLSVAEKHGLTLERRLEMTGVCASQMALTLLGGPNRLNPKNVHQRPTVALLCGPHVKGAQGIRCGRHLANHDVQVILFLPNFVKMLESITNELSLFSKTQGQQVSSLKDLPTSPVDLVINCLDCPENVFLRDQPWYKAAVAWANQNRAPVLSIDPPVHEVEQGIDAKWSLALGLPLPLGEHAGRIYLCDIGIPQQVFQEVGINYHSPFGCKFVIPLHSA</sequence>
<protein>
    <recommendedName>
        <fullName>Enhancer of mRNA-decapping protein 3</fullName>
    </recommendedName>
    <alternativeName>
        <fullName>YjeF domain-containing protein 1</fullName>
    </alternativeName>
</protein>
<name>EDC3_PONAB</name>
<proteinExistence type="evidence at transcript level"/>